<evidence type="ECO:0000250" key="1">
    <source>
        <dbReference type="UniProtKB" id="O77836"/>
    </source>
</evidence>
<evidence type="ECO:0000250" key="2">
    <source>
        <dbReference type="UniProtKB" id="Q812G0"/>
    </source>
</evidence>
<evidence type="ECO:0000250" key="3">
    <source>
        <dbReference type="UniProtKB" id="Q9D4R2"/>
    </source>
</evidence>
<evidence type="ECO:0000250" key="4">
    <source>
        <dbReference type="UniProtKB" id="Q9UM21"/>
    </source>
</evidence>
<evidence type="ECO:0000255" key="5"/>
<evidence type="ECO:0000305" key="6"/>
<name>MGT4A_PONAB</name>
<accession>Q5REP8</accession>
<organism>
    <name type="scientific">Pongo abelii</name>
    <name type="common">Sumatran orangutan</name>
    <name type="synonym">Pongo pygmaeus abelii</name>
    <dbReference type="NCBI Taxonomy" id="9601"/>
    <lineage>
        <taxon>Eukaryota</taxon>
        <taxon>Metazoa</taxon>
        <taxon>Chordata</taxon>
        <taxon>Craniata</taxon>
        <taxon>Vertebrata</taxon>
        <taxon>Euteleostomi</taxon>
        <taxon>Mammalia</taxon>
        <taxon>Eutheria</taxon>
        <taxon>Euarchontoglires</taxon>
        <taxon>Primates</taxon>
        <taxon>Haplorrhini</taxon>
        <taxon>Catarrhini</taxon>
        <taxon>Hominidae</taxon>
        <taxon>Pongo</taxon>
    </lineage>
</organism>
<dbReference type="EC" id="2.4.1.145" evidence="1"/>
<dbReference type="EMBL" id="CR857472">
    <property type="protein sequence ID" value="CAH89759.1"/>
    <property type="molecule type" value="mRNA"/>
</dbReference>
<dbReference type="RefSeq" id="NP_001128986.1">
    <property type="nucleotide sequence ID" value="NM_001135514.1"/>
</dbReference>
<dbReference type="SMR" id="Q5REP8"/>
<dbReference type="FunCoup" id="Q5REP8">
    <property type="interactions" value="1320"/>
</dbReference>
<dbReference type="STRING" id="9601.ENSPPYP00000013476"/>
<dbReference type="CAZy" id="GT54">
    <property type="family name" value="Glycosyltransferase Family 54"/>
</dbReference>
<dbReference type="GlyCosmos" id="Q5REP8">
    <property type="glycosylation" value="2 sites, No reported glycans"/>
</dbReference>
<dbReference type="GeneID" id="100190826"/>
<dbReference type="KEGG" id="pon:100190826"/>
<dbReference type="CTD" id="11320"/>
<dbReference type="eggNOG" id="ENOG502QPQJ">
    <property type="taxonomic scope" value="Eukaryota"/>
</dbReference>
<dbReference type="InParanoid" id="Q5REP8"/>
<dbReference type="OrthoDB" id="2016523at2759"/>
<dbReference type="UniPathway" id="UPA00378"/>
<dbReference type="Proteomes" id="UP000001595">
    <property type="component" value="Unplaced"/>
</dbReference>
<dbReference type="GO" id="GO:0005783">
    <property type="term" value="C:endoplasmic reticulum"/>
    <property type="evidence" value="ECO:0007669"/>
    <property type="project" value="TreeGrafter"/>
</dbReference>
<dbReference type="GO" id="GO:0005793">
    <property type="term" value="C:endoplasmic reticulum-Golgi intermediate compartment"/>
    <property type="evidence" value="ECO:0007669"/>
    <property type="project" value="TreeGrafter"/>
</dbReference>
<dbReference type="GO" id="GO:0005576">
    <property type="term" value="C:extracellular region"/>
    <property type="evidence" value="ECO:0007669"/>
    <property type="project" value="UniProtKB-SubCell"/>
</dbReference>
<dbReference type="GO" id="GO:0000139">
    <property type="term" value="C:Golgi membrane"/>
    <property type="evidence" value="ECO:0007669"/>
    <property type="project" value="UniProtKB-SubCell"/>
</dbReference>
<dbReference type="GO" id="GO:0005795">
    <property type="term" value="C:Golgi stack"/>
    <property type="evidence" value="ECO:0007669"/>
    <property type="project" value="TreeGrafter"/>
</dbReference>
<dbReference type="GO" id="GO:0005777">
    <property type="term" value="C:peroxisome"/>
    <property type="evidence" value="ECO:0000250"/>
    <property type="project" value="UniProtKB"/>
</dbReference>
<dbReference type="GO" id="GO:0008453">
    <property type="term" value="F:alanine-glyoxylate transaminase activity"/>
    <property type="evidence" value="ECO:0000250"/>
    <property type="project" value="UniProtKB"/>
</dbReference>
<dbReference type="GO" id="GO:0008454">
    <property type="term" value="F:alpha-1,3-mannosylglycoprotein 4-beta-N-acetylglucosaminyltransferase activity"/>
    <property type="evidence" value="ECO:0000250"/>
    <property type="project" value="UniProtKB"/>
</dbReference>
<dbReference type="GO" id="GO:0046872">
    <property type="term" value="F:metal ion binding"/>
    <property type="evidence" value="ECO:0007669"/>
    <property type="project" value="UniProtKB-KW"/>
</dbReference>
<dbReference type="GO" id="GO:0042803">
    <property type="term" value="F:protein homodimerization activity"/>
    <property type="evidence" value="ECO:0000250"/>
    <property type="project" value="UniProtKB"/>
</dbReference>
<dbReference type="GO" id="GO:0046487">
    <property type="term" value="P:glyoxylate metabolic process"/>
    <property type="evidence" value="ECO:0000250"/>
    <property type="project" value="UniProtKB"/>
</dbReference>
<dbReference type="GO" id="GO:0006491">
    <property type="term" value="P:N-glycan processing"/>
    <property type="evidence" value="ECO:0000250"/>
    <property type="project" value="UniProtKB"/>
</dbReference>
<dbReference type="GO" id="GO:0006487">
    <property type="term" value="P:protein N-linked glycosylation"/>
    <property type="evidence" value="ECO:0007669"/>
    <property type="project" value="TreeGrafter"/>
</dbReference>
<dbReference type="InterPro" id="IPR006759">
    <property type="entry name" value="Glyco_transf_54"/>
</dbReference>
<dbReference type="InterPro" id="IPR056576">
    <property type="entry name" value="MGAT4_A/B/C_C"/>
</dbReference>
<dbReference type="PANTHER" id="PTHR12062:SF4">
    <property type="entry name" value="ALPHA-1,3-MANNOSYL-GLYCOPROTEIN 4-BETA-N-ACETYLGLUCOSAMINYLTRANSFERASE A"/>
    <property type="match status" value="1"/>
</dbReference>
<dbReference type="PANTHER" id="PTHR12062">
    <property type="entry name" value="N-ACETYLGLUCOSAMINYLTRANSFERASE VI"/>
    <property type="match status" value="1"/>
</dbReference>
<dbReference type="Pfam" id="PF04666">
    <property type="entry name" value="MGAT4_cons"/>
    <property type="match status" value="1"/>
</dbReference>
<dbReference type="Pfam" id="PF23524">
    <property type="entry name" value="MGAT4A_C"/>
    <property type="match status" value="1"/>
</dbReference>
<gene>
    <name evidence="4" type="primary">MGAT4A</name>
</gene>
<feature type="chain" id="PRO_0000288587" description="Alpha-1,3-mannosyl-glycoprotein 4-beta-N-acetylglucosaminyltransferase A">
    <location>
        <begin position="1"/>
        <end position="535"/>
    </location>
</feature>
<feature type="chain" id="PRO_0000288588" description="Alpha-1,3-mannosyl-glycoprotein 4-beta-N-acetylglucosaminyltransferase A soluble form" evidence="1">
    <location>
        <begin position="93"/>
        <end position="535"/>
    </location>
</feature>
<feature type="topological domain" description="Cytoplasmic" evidence="5">
    <location>
        <begin position="1"/>
        <end position="4"/>
    </location>
</feature>
<feature type="transmembrane region" description="Helical; Signal-anchor for type II membrane protein" evidence="5">
    <location>
        <begin position="5"/>
        <end position="27"/>
    </location>
</feature>
<feature type="topological domain" description="Lumenal" evidence="5">
    <location>
        <begin position="28"/>
        <end position="535"/>
    </location>
</feature>
<feature type="coiled-coil region" evidence="5">
    <location>
        <begin position="28"/>
        <end position="63"/>
    </location>
</feature>
<feature type="modified residue" description="Phosphoserine" evidence="4">
    <location>
        <position position="474"/>
    </location>
</feature>
<feature type="glycosylation site" description="N-linked (GlcNAc...) asparagine" evidence="5">
    <location>
        <position position="77"/>
    </location>
</feature>
<feature type="glycosylation site" description="N-linked (GlcNAc...) asparagine" evidence="5">
    <location>
        <position position="458"/>
    </location>
</feature>
<protein>
    <recommendedName>
        <fullName evidence="4">Alpha-1,3-mannosyl-glycoprotein 4-beta-N-acetylglucosaminyltransferase A</fullName>
        <ecNumber evidence="1">2.4.1.145</ecNumber>
    </recommendedName>
    <alternativeName>
        <fullName>N-glycosyl-oligosaccharide-glycoprotein N-acetylglucosaminyltransferase IVa</fullName>
        <shortName>GlcNAc-T IVa</shortName>
        <shortName>GnT-IVa</shortName>
        <shortName>N-acetylglucosaminyltransferase IVa</shortName>
    </alternativeName>
    <alternativeName>
        <fullName>UDP-N-acetylglucosamine: alpha-1,3-D-mannoside beta-1,4-N-acetylglucosaminyltransferase IVa</fullName>
    </alternativeName>
    <component>
        <recommendedName>
            <fullName>Alpha-1,3-mannosyl-glycoprotein 4-beta-N-acetylglucosaminyltransferase A soluble form</fullName>
        </recommendedName>
    </component>
</protein>
<sequence length="535" mass="61525">MRLRNGTVATALAFITSFLTLSWYTTWQNGKEKLIAYQREFLALKERLRIAEHRISQRSSELNTIVQQFKRVGAETNGSKDALNKFSDNTLKLLKELTSKKSLQVPSIYYHLPHLLKNEGSLQPAVQIGNGRTGVSIVMGIPTVKREVKSYLIETLHSLIDNLYPEEKLDCVIVVFIGETDIDYVHGVVANLEKEFSKEISSGLVEVISPPESYYPDLTNLKETFGDSKERVRWRTKQNLDYCFLMMYAQEKGIYYIQLEDDIIVKQNYFNTIKNFALQLSSEEWMILEFSQLGFIGKMFQAPDLTLIVEFIFMFYKEKPIDWLLDHILWVKVCNPEKDAKHCDRQKANLRIHFRPSLFQHVGLHSSLSGKIQKLTDKDYMKPLLLKIHVNPPAEVSTSLKVYQGHTLEKTYMGEDFFWAITPIAGDYILFKFDKPVNVESYLFHSGNQEHPGDILLNTTVEVLPFKSEGLEISKETKDKRLEDGYFRIGKFENGVAEGMVDPSLNPISAFRLSVIQNSAVWAILNEIHIKKATN</sequence>
<proteinExistence type="evidence at transcript level"/>
<keyword id="KW-0175">Coiled coil</keyword>
<keyword id="KW-0325">Glycoprotein</keyword>
<keyword id="KW-0328">Glycosyltransferase</keyword>
<keyword id="KW-0333">Golgi apparatus</keyword>
<keyword id="KW-0472">Membrane</keyword>
<keyword id="KW-0479">Metal-binding</keyword>
<keyword id="KW-0597">Phosphoprotein</keyword>
<keyword id="KW-1185">Reference proteome</keyword>
<keyword id="KW-0964">Secreted</keyword>
<keyword id="KW-0735">Signal-anchor</keyword>
<keyword id="KW-0808">Transferase</keyword>
<keyword id="KW-0812">Transmembrane</keyword>
<keyword id="KW-1133">Transmembrane helix</keyword>
<reference key="1">
    <citation type="submission" date="2004-11" db="EMBL/GenBank/DDBJ databases">
        <authorList>
            <consortium name="The German cDNA consortium"/>
        </authorList>
    </citation>
    <scope>NUCLEOTIDE SEQUENCE [LARGE SCALE MRNA]</scope>
    <source>
        <tissue>Kidney</tissue>
    </source>
</reference>
<comment type="function">
    <text evidence="1 2">Glycosyltransferase that catalyze the transfer of GlcNAc from UDP-GlcNAc to the GlcNAcbeta1-2Manalpha1-3 arm of the core structure of N-linked glycans through a beta1-4 linkage and participates in the production of tri- and tetra-antennary N-linked sugar chains (By similarity). Involved in glucose transport by mediating SLC2A2/GLUT2 glycosylation, thereby controlling cell-surface expression of SLC2A2 in pancreatic beta cells (By similarity).</text>
</comment>
<comment type="catalytic activity">
    <reaction evidence="4">
        <text>N(4)-{beta-D-GlcNAc-(1-&gt;2)-alpha-D-Man-(1-&gt;3)-[beta-D-GlcNAc-(1-&gt;2)-alpha-D-Man-(1-&gt;6)]-beta-D-Man-(1-&gt;4)-beta-D-GlcNAc-(1-&gt;4)-beta-D-GlcNAc}-L-asparaginyl-[protein] + UDP-N-acetyl-alpha-D-glucosamine = N(4)-{beta-D-GlcNAc-(1-&gt;2)-[beta-D-GlcNAc-(1-&gt;4)]-alpha-D-Man-(1-&gt;3)-[beta-D-GlcNAc-(1-&gt;2)-alpha-D-Man-(1-&gt;6)]-beta-D-Man-(1-&gt;4)-beta-D-GlcNAc-(1-&gt;4)-beta-D-GlcNAc}-L-asparaginyl-[protein] + UDP + H(+)</text>
        <dbReference type="Rhea" id="RHEA:16057"/>
        <dbReference type="Rhea" id="RHEA-COMP:13526"/>
        <dbReference type="Rhea" id="RHEA-COMP:14374"/>
        <dbReference type="ChEBI" id="CHEBI:15378"/>
        <dbReference type="ChEBI" id="CHEBI:57705"/>
        <dbReference type="ChEBI" id="CHEBI:58223"/>
        <dbReference type="ChEBI" id="CHEBI:60651"/>
        <dbReference type="ChEBI" id="CHEBI:139507"/>
        <dbReference type="EC" id="2.4.1.145"/>
    </reaction>
    <physiologicalReaction direction="left-to-right" evidence="4">
        <dbReference type="Rhea" id="RHEA:16058"/>
    </physiologicalReaction>
</comment>
<comment type="catalytic activity">
    <reaction evidence="4">
        <text>an N(4)-{beta-D-GlcNAc-(1-&gt;2)-alpha-D-Man-(1-&gt;3)-[alpha-D-Man-(1-&gt;6)]-beta-D-Man-(1-&gt;4)-beta-D-GlcNAc-(1-&gt;4)-beta-D-GlcNAc}-L-asparaginyl-[protein] + UDP-N-acetyl-alpha-D-glucosamine = an N(4)-{beta-D-GlcNAc-(1-&gt;2)-[beta-D-GlcNAc-(1-&gt;4)]-alpha-D-Man-(1-&gt;3)-[alpha-D-Man-(1-&gt;6)]-beta-D-Man-(1-&gt;4)-beta-D-GlcNAc-(1-&gt;4)-beta-D-GlcNAc}-L-asparaginyl-[protein] + UDP + H(+)</text>
        <dbReference type="Rhea" id="RHEA:69615"/>
        <dbReference type="Rhea" id="RHEA-COMP:14369"/>
        <dbReference type="Rhea" id="RHEA-COMP:17732"/>
        <dbReference type="ChEBI" id="CHEBI:15378"/>
        <dbReference type="ChEBI" id="CHEBI:57705"/>
        <dbReference type="ChEBI" id="CHEBI:58223"/>
        <dbReference type="ChEBI" id="CHEBI:60615"/>
        <dbReference type="ChEBI" id="CHEBI:187873"/>
    </reaction>
    <physiologicalReaction direction="left-to-right" evidence="4">
        <dbReference type="Rhea" id="RHEA:69616"/>
    </physiologicalReaction>
</comment>
<comment type="catalytic activity">
    <reaction evidence="4">
        <text>an N(4)-{beta-D-GlcNAc-(1-&gt;2)-alpha-D-Man-(1-&gt;3)-[beta-D-GlcNAc-(1-&gt;2)-[beta-D-GlcNAc-(1-&gt;6)]-alpha-D-Man-(1-&gt;6)]-beta-D-Man-(1-&gt;4)-beta-D-GlcNAc-(1-&gt;4)-beta-D-GlcNAc}-L-asparaginyl-[protein] + UDP-N-acetyl-alpha-D-glucosamine = an N(4)-{beta-D-GlcNAc-(1-&gt;2)-[beta-D-GlcNAc-(1-&gt;4)]-alpha-D-Man-(1-&gt;3)-[beta-D-GlcNAc-(1-&gt;2)-[beta-D-GlcNAc-(1-&gt;6)]-alpha-D-Man-(1-&gt;6)]-beta-D-Man-(1-&gt;4)-beta-D-GlcNAc-(1-&gt;4)-beta-D-GlcNAc}-L-asparaginyl-[protein] + UDP + H(+)</text>
        <dbReference type="Rhea" id="RHEA:69619"/>
        <dbReference type="Rhea" id="RHEA-COMP:17733"/>
        <dbReference type="Rhea" id="RHEA-COMP:17734"/>
        <dbReference type="ChEBI" id="CHEBI:15378"/>
        <dbReference type="ChEBI" id="CHEBI:57705"/>
        <dbReference type="ChEBI" id="CHEBI:58223"/>
        <dbReference type="ChEBI" id="CHEBI:187874"/>
        <dbReference type="ChEBI" id="CHEBI:187875"/>
    </reaction>
    <physiologicalReaction direction="left-to-right" evidence="4">
        <dbReference type="Rhea" id="RHEA:69620"/>
    </physiologicalReaction>
</comment>
<comment type="catalytic activity">
    <reaction evidence="4">
        <text>an N(4)-{beta-D-GlcNAc-(1-&gt;2)-alpha-D-Man-(1-&gt;3)-[beta-D-GlcNAc-(1-&gt;2)-alpha-D-Man-(1-&gt;6)]-beta-D-Man-(1-&gt;4)-beta-D-GlcNAc-(1-&gt;4)-[alpha-L-Fuc-(1-&gt;6)]-beta-D-GlcNAc}-L-asparaginyl-[protein] + UDP-N-acetyl-alpha-D-glucosamine = N(4)-{beta-D-GlcNAc-(1-&gt;2)-[beta-D-GlcNAc-(1-&gt;4)]-alpha-D-Man-(1-&gt;3)-[beta-D-GlcNAc-(1-&gt;2)-alpha-D-Man-(1-&gt;6)]-beta-D-Man-(1-&gt;4)-beta-D-GlcNAc-(1-&gt;4)-[alpha-L-Fuc-(1-&gt;6)]-beta-D-GlcNAc}-asparaginyl-[protein] + UDP + H(+)</text>
        <dbReference type="Rhea" id="RHEA:69623"/>
        <dbReference type="Rhea" id="RHEA-COMP:13532"/>
        <dbReference type="Rhea" id="RHEA-COMP:18198"/>
        <dbReference type="ChEBI" id="CHEBI:15378"/>
        <dbReference type="ChEBI" id="CHEBI:57705"/>
        <dbReference type="ChEBI" id="CHEBI:58223"/>
        <dbReference type="ChEBI" id="CHEBI:137207"/>
        <dbReference type="ChEBI" id="CHEBI:187877"/>
    </reaction>
    <physiologicalReaction direction="left-to-right" evidence="4">
        <dbReference type="Rhea" id="RHEA:69624"/>
    </physiologicalReaction>
</comment>
<comment type="catalytic activity">
    <reaction evidence="4">
        <text>an N(4)-{beta-D-GlcNAc-(1-&gt;2)-alpha-D-Man-(1-&gt;3)-[beta-D-Gal-(1-&gt;4)-beta-D-GlcNAc-(1-&gt;2)-alpha-D-Man-(1-&gt;6)]-beta-D-Man-(1-&gt;4)-beta-D-GlcNAc-(1-&gt;4)-beta-D-GlcNAc}-L-asparaginyl-[protein] + UDP-N-acetyl-alpha-D-glucosamine = an N(4)-{beta-D-GlcNAc-(1-&gt;2)-[beta-D-GlcNAc-(1-&gt;4)]-alpha-D-Man-(1-&gt;3)-[beta-D-Gal-(1-&gt;4)-beta-D-GlcNAc-(1-&gt;2)-alpha-D-Man-(1-&gt;6)]-beta-D-Man-(1-&gt;4)-beta-D-GlcNAc-(1-&gt;4)-beta-D-GlcNAc}-L-asparaginyl-[protein] + UDP + H(+)</text>
        <dbReference type="Rhea" id="RHEA:69627"/>
        <dbReference type="Rhea" id="RHEA-COMP:17737"/>
        <dbReference type="Rhea" id="RHEA-COMP:17738"/>
        <dbReference type="ChEBI" id="CHEBI:15378"/>
        <dbReference type="ChEBI" id="CHEBI:57705"/>
        <dbReference type="ChEBI" id="CHEBI:58223"/>
        <dbReference type="ChEBI" id="CHEBI:187878"/>
        <dbReference type="ChEBI" id="CHEBI:187879"/>
    </reaction>
    <physiologicalReaction direction="left-to-right" evidence="4">
        <dbReference type="Rhea" id="RHEA:69628"/>
    </physiologicalReaction>
</comment>
<comment type="catalytic activity">
    <reaction evidence="4">
        <text>N(4)-{beta-D-GlcNAc-(1-&gt;2)-alpha-D-Man-(1-&gt;3)-[alpha-D-Man-(1-&gt;3)-{alpha-D-Man-(1-&gt;6)}-alpha-D-Man-(1-&gt;6)]-beta-D-Man-(1-&gt;4)-beta-D-GlcNAc-(1-&gt;4)-beta-D-GlcNAc}-asparaginyl-[protein] + UDP-N-acetyl-alpha-D-glucosamine = N(4)-{beta-D-GlcNAc-(1-&gt;2)-[beta-D-GlcNAc-(1-&gt;4)]-alpha-D-Man-(1-&gt;3)-[alpha-D-Man-(1-&gt;3)-{alpha-D-Man-(1-&gt;6)}-alpha-D-Man-(1-&gt;6)]-beta-D-Man-(1-&gt;4)-beta-D-GlcNAc-(1-&gt;4)-beta-D-GlcNAc}-asparaginyl-[protein] + UDP + H(+)</text>
        <dbReference type="Rhea" id="RHEA:69631"/>
        <dbReference type="Rhea" id="RHEA-COMP:17739"/>
        <dbReference type="Rhea" id="RHEA-COMP:17740"/>
        <dbReference type="ChEBI" id="CHEBI:15378"/>
        <dbReference type="ChEBI" id="CHEBI:57705"/>
        <dbReference type="ChEBI" id="CHEBI:58223"/>
        <dbReference type="ChEBI" id="CHEBI:187880"/>
        <dbReference type="ChEBI" id="CHEBI:187881"/>
    </reaction>
    <physiologicalReaction direction="left-to-right" evidence="4">
        <dbReference type="Rhea" id="RHEA:69632"/>
    </physiologicalReaction>
</comment>
<comment type="catalytic activity">
    <reaction evidence="4">
        <text>N(4)-{beta-D-GlcNAc-(1-&gt;2)-alpha-D-Man-(1-&gt;3)-beta-D-Man-(1-&gt;4)-beta-D-GlcNAc-(1-&gt;4)-beta-D-GlcNAc}-asparaginyl-[protein] + UDP-N-acetyl-alpha-D-glucosamine = N(4)-{beta-D-GlcNAc-(1-&gt;2)-[beta-D-GlcNAc-(1-&gt;4)]-alpha-D-Man-(1-&gt;3)-beta-D-Man-(1-&gt;4)-beta-D-GlcNAc-(1-&gt;4)-beta-D-GlcNAc}-asparaginyl-[protein] + UDP + H(+)</text>
        <dbReference type="Rhea" id="RHEA:69635"/>
        <dbReference type="Rhea" id="RHEA-COMP:17741"/>
        <dbReference type="Rhea" id="RHEA-COMP:17742"/>
        <dbReference type="ChEBI" id="CHEBI:15378"/>
        <dbReference type="ChEBI" id="CHEBI:57705"/>
        <dbReference type="ChEBI" id="CHEBI:58223"/>
        <dbReference type="ChEBI" id="CHEBI:187882"/>
        <dbReference type="ChEBI" id="CHEBI:187883"/>
    </reaction>
    <physiologicalReaction direction="left-to-right" evidence="4">
        <dbReference type="Rhea" id="RHEA:69636"/>
    </physiologicalReaction>
</comment>
<comment type="cofactor">
    <cofactor evidence="1">
        <name>a divalent metal cation</name>
        <dbReference type="ChEBI" id="CHEBI:60240"/>
    </cofactor>
</comment>
<comment type="activity regulation">
    <text evidence="1">Inhibited by UDP.</text>
</comment>
<comment type="pathway">
    <text evidence="1">Protein modification; protein glycosylation.</text>
</comment>
<comment type="subcellular location">
    <subcellularLocation>
        <location evidence="3">Golgi apparatus membrane</location>
        <topology evidence="3">Single-pass type II membrane protein</topology>
    </subcellularLocation>
</comment>
<comment type="subcellular location">
    <molecule>Alpha-1,3-mannosyl-glycoprotein 4-beta-N-acetylglucosaminyltransferase A soluble form</molecule>
    <subcellularLocation>
        <location evidence="1">Secreted</location>
    </subcellularLocation>
</comment>
<comment type="PTM">
    <text evidence="1">N-glycosylated.</text>
</comment>
<comment type="similarity">
    <text evidence="6">Belongs to the glycosyltransferase 54 family.</text>
</comment>